<comment type="function">
    <text evidence="1">Catalyzes the specific phosphorylation of 1,6-anhydro-N-acetylmuramic acid (anhMurNAc) with the simultaneous cleavage of the 1,6-anhydro ring, generating MurNAc-6-P. Is required for the utilization of anhMurNAc either imported from the medium or derived from its own cell wall murein, and thus plays a role in cell wall recycling.</text>
</comment>
<comment type="catalytic activity">
    <reaction evidence="1">
        <text>1,6-anhydro-N-acetyl-beta-muramate + ATP + H2O = N-acetyl-D-muramate 6-phosphate + ADP + H(+)</text>
        <dbReference type="Rhea" id="RHEA:24952"/>
        <dbReference type="ChEBI" id="CHEBI:15377"/>
        <dbReference type="ChEBI" id="CHEBI:15378"/>
        <dbReference type="ChEBI" id="CHEBI:30616"/>
        <dbReference type="ChEBI" id="CHEBI:58690"/>
        <dbReference type="ChEBI" id="CHEBI:58722"/>
        <dbReference type="ChEBI" id="CHEBI:456216"/>
        <dbReference type="EC" id="2.7.1.170"/>
    </reaction>
</comment>
<comment type="pathway">
    <text evidence="1">Amino-sugar metabolism; 1,6-anhydro-N-acetylmuramate degradation.</text>
</comment>
<comment type="pathway">
    <text evidence="1">Cell wall biogenesis; peptidoglycan recycling.</text>
</comment>
<comment type="similarity">
    <text evidence="1">Belongs to the anhydro-N-acetylmuramic acid kinase family.</text>
</comment>
<gene>
    <name evidence="1" type="primary">anmK</name>
    <name type="ordered locus">BCB4264_A2420</name>
</gene>
<organism>
    <name type="scientific">Bacillus cereus (strain B4264)</name>
    <dbReference type="NCBI Taxonomy" id="405532"/>
    <lineage>
        <taxon>Bacteria</taxon>
        <taxon>Bacillati</taxon>
        <taxon>Bacillota</taxon>
        <taxon>Bacilli</taxon>
        <taxon>Bacillales</taxon>
        <taxon>Bacillaceae</taxon>
        <taxon>Bacillus</taxon>
        <taxon>Bacillus cereus group</taxon>
    </lineage>
</organism>
<evidence type="ECO:0000255" key="1">
    <source>
        <dbReference type="HAMAP-Rule" id="MF_01270"/>
    </source>
</evidence>
<protein>
    <recommendedName>
        <fullName evidence="1">Anhydro-N-acetylmuramic acid kinase</fullName>
        <ecNumber evidence="1">2.7.1.170</ecNumber>
    </recommendedName>
    <alternativeName>
        <fullName evidence="1">AnhMurNAc kinase</fullName>
    </alternativeName>
</protein>
<accession>B7H7M2</accession>
<feature type="chain" id="PRO_1000214157" description="Anhydro-N-acetylmuramic acid kinase">
    <location>
        <begin position="1"/>
        <end position="390"/>
    </location>
</feature>
<feature type="binding site" evidence="1">
    <location>
        <begin position="9"/>
        <end position="16"/>
    </location>
    <ligand>
        <name>ATP</name>
        <dbReference type="ChEBI" id="CHEBI:30616"/>
    </ligand>
</feature>
<sequence>MYVAGVMSGTSLDGIDVALVHIDGSGVDSKVELIHFTTVPFCNDMKNDIQQALSIENSNVQLICSLNFKLGLRFANAVKEVCKEANFPLRQLDLIGSHGQTIYHQPQQDGGMIPSTLQIGEPAIIAYETNTTVISNFRTMDMAAGGQGAPLVPYSEIILYRHQTKNRLLQNIGGIGNVTVIPSQLSEKSVIAFDTGPGNMVMDEVCQRLFQLSYDQNGNIAKQGVVVEEVLTYCMNHPFLKMNPPKSTGREQFGEAFVTGLLNRFKKHSKENILATVTMFTACSIVHHYKAFILPYYEIDEVILGGGGSYNNTLVEMLRNGLREEKCSICIQEDIGHSSAAKEAIAFAILANETYHRNPSNVPSATGAKNSVILGNITFPPYADENEANI</sequence>
<name>ANMK_BACC4</name>
<proteinExistence type="inferred from homology"/>
<keyword id="KW-0067">ATP-binding</keyword>
<keyword id="KW-0119">Carbohydrate metabolism</keyword>
<keyword id="KW-0418">Kinase</keyword>
<keyword id="KW-0547">Nucleotide-binding</keyword>
<keyword id="KW-0808">Transferase</keyword>
<reference key="1">
    <citation type="submission" date="2008-10" db="EMBL/GenBank/DDBJ databases">
        <title>Genome sequence of Bacillus cereus B4264.</title>
        <authorList>
            <person name="Dodson R.J."/>
            <person name="Durkin A.S."/>
            <person name="Rosovitz M.J."/>
            <person name="Rasko D.A."/>
            <person name="Hoffmaster A."/>
            <person name="Ravel J."/>
            <person name="Sutton G."/>
        </authorList>
    </citation>
    <scope>NUCLEOTIDE SEQUENCE [LARGE SCALE GENOMIC DNA]</scope>
    <source>
        <strain>B4264</strain>
    </source>
</reference>
<dbReference type="EC" id="2.7.1.170" evidence="1"/>
<dbReference type="EMBL" id="CP001176">
    <property type="protein sequence ID" value="ACK61273.1"/>
    <property type="molecule type" value="Genomic_DNA"/>
</dbReference>
<dbReference type="RefSeq" id="WP_000289009.1">
    <property type="nucleotide sequence ID" value="NC_011725.1"/>
</dbReference>
<dbReference type="SMR" id="B7H7M2"/>
<dbReference type="KEGG" id="bcb:BCB4264_A2420"/>
<dbReference type="HOGENOM" id="CLU_038782_1_0_9"/>
<dbReference type="UniPathway" id="UPA00343"/>
<dbReference type="UniPathway" id="UPA00544"/>
<dbReference type="Proteomes" id="UP000007096">
    <property type="component" value="Chromosome"/>
</dbReference>
<dbReference type="GO" id="GO:0005524">
    <property type="term" value="F:ATP binding"/>
    <property type="evidence" value="ECO:0007669"/>
    <property type="project" value="UniProtKB-UniRule"/>
</dbReference>
<dbReference type="GO" id="GO:0016301">
    <property type="term" value="F:kinase activity"/>
    <property type="evidence" value="ECO:0007669"/>
    <property type="project" value="UniProtKB-KW"/>
</dbReference>
<dbReference type="GO" id="GO:0016773">
    <property type="term" value="F:phosphotransferase activity, alcohol group as acceptor"/>
    <property type="evidence" value="ECO:0007669"/>
    <property type="project" value="UniProtKB-UniRule"/>
</dbReference>
<dbReference type="GO" id="GO:0097175">
    <property type="term" value="P:1,6-anhydro-N-acetyl-beta-muramic acid catabolic process"/>
    <property type="evidence" value="ECO:0007669"/>
    <property type="project" value="UniProtKB-UniRule"/>
</dbReference>
<dbReference type="GO" id="GO:0006040">
    <property type="term" value="P:amino sugar metabolic process"/>
    <property type="evidence" value="ECO:0007669"/>
    <property type="project" value="InterPro"/>
</dbReference>
<dbReference type="GO" id="GO:0009254">
    <property type="term" value="P:peptidoglycan turnover"/>
    <property type="evidence" value="ECO:0007669"/>
    <property type="project" value="UniProtKB-UniRule"/>
</dbReference>
<dbReference type="CDD" id="cd24050">
    <property type="entry name" value="ASKHA_NBD_ANMK"/>
    <property type="match status" value="1"/>
</dbReference>
<dbReference type="Gene3D" id="3.30.420.40">
    <property type="match status" value="2"/>
</dbReference>
<dbReference type="HAMAP" id="MF_01270">
    <property type="entry name" value="AnhMurNAc_kinase"/>
    <property type="match status" value="1"/>
</dbReference>
<dbReference type="InterPro" id="IPR005338">
    <property type="entry name" value="Anhydro_N_Ac-Mur_kinase"/>
</dbReference>
<dbReference type="InterPro" id="IPR043129">
    <property type="entry name" value="ATPase_NBD"/>
</dbReference>
<dbReference type="NCBIfam" id="NF007142">
    <property type="entry name" value="PRK09585.2-1"/>
    <property type="match status" value="1"/>
</dbReference>
<dbReference type="NCBIfam" id="NF007148">
    <property type="entry name" value="PRK09585.3-2"/>
    <property type="match status" value="1"/>
</dbReference>
<dbReference type="PANTHER" id="PTHR30605">
    <property type="entry name" value="ANHYDRO-N-ACETYLMURAMIC ACID KINASE"/>
    <property type="match status" value="1"/>
</dbReference>
<dbReference type="PANTHER" id="PTHR30605:SF0">
    <property type="entry name" value="ANHYDRO-N-ACETYLMURAMIC ACID KINASE"/>
    <property type="match status" value="1"/>
</dbReference>
<dbReference type="Pfam" id="PF03702">
    <property type="entry name" value="AnmK"/>
    <property type="match status" value="1"/>
</dbReference>
<dbReference type="SUPFAM" id="SSF53067">
    <property type="entry name" value="Actin-like ATPase domain"/>
    <property type="match status" value="1"/>
</dbReference>